<accession>A6LL44</accession>
<name>CINAL_THEM4</name>
<protein>
    <recommendedName>
        <fullName evidence="1">CinA-like protein</fullName>
    </recommendedName>
</protein>
<organism>
    <name type="scientific">Thermosipho melanesiensis (strain DSM 12029 / CIP 104789 / BI429)</name>
    <dbReference type="NCBI Taxonomy" id="391009"/>
    <lineage>
        <taxon>Bacteria</taxon>
        <taxon>Thermotogati</taxon>
        <taxon>Thermotogota</taxon>
        <taxon>Thermotogae</taxon>
        <taxon>Thermotogales</taxon>
        <taxon>Fervidobacteriaceae</taxon>
        <taxon>Thermosipho</taxon>
    </lineage>
</organism>
<evidence type="ECO:0000255" key="1">
    <source>
        <dbReference type="HAMAP-Rule" id="MF_00226"/>
    </source>
</evidence>
<dbReference type="EMBL" id="CP000716">
    <property type="protein sequence ID" value="ABR30645.1"/>
    <property type="molecule type" value="Genomic_DNA"/>
</dbReference>
<dbReference type="RefSeq" id="WP_012057006.1">
    <property type="nucleotide sequence ID" value="NC_009616.1"/>
</dbReference>
<dbReference type="SMR" id="A6LL44"/>
<dbReference type="STRING" id="391009.Tmel_0783"/>
<dbReference type="KEGG" id="tme:Tmel_0783"/>
<dbReference type="eggNOG" id="COG1058">
    <property type="taxonomic scope" value="Bacteria"/>
</dbReference>
<dbReference type="eggNOG" id="COG1546">
    <property type="taxonomic scope" value="Bacteria"/>
</dbReference>
<dbReference type="HOGENOM" id="CLU_030805_9_3_0"/>
<dbReference type="OrthoDB" id="9801454at2"/>
<dbReference type="Proteomes" id="UP000001110">
    <property type="component" value="Chromosome"/>
</dbReference>
<dbReference type="CDD" id="cd00885">
    <property type="entry name" value="cinA"/>
    <property type="match status" value="1"/>
</dbReference>
<dbReference type="Gene3D" id="3.30.70.2860">
    <property type="match status" value="1"/>
</dbReference>
<dbReference type="Gene3D" id="3.90.950.20">
    <property type="entry name" value="CinA-like"/>
    <property type="match status" value="1"/>
</dbReference>
<dbReference type="Gene3D" id="3.40.980.10">
    <property type="entry name" value="MoaB/Mog-like domain"/>
    <property type="match status" value="1"/>
</dbReference>
<dbReference type="HAMAP" id="MF_00226_B">
    <property type="entry name" value="CinA_B"/>
    <property type="match status" value="1"/>
</dbReference>
<dbReference type="InterPro" id="IPR050101">
    <property type="entry name" value="CinA"/>
</dbReference>
<dbReference type="InterPro" id="IPR036653">
    <property type="entry name" value="CinA-like_C"/>
</dbReference>
<dbReference type="InterPro" id="IPR008136">
    <property type="entry name" value="CinA_C"/>
</dbReference>
<dbReference type="InterPro" id="IPR041424">
    <property type="entry name" value="CinA_KH"/>
</dbReference>
<dbReference type="InterPro" id="IPR008135">
    <property type="entry name" value="Competence-induced_CinA"/>
</dbReference>
<dbReference type="InterPro" id="IPR036425">
    <property type="entry name" value="MoaB/Mog-like_dom_sf"/>
</dbReference>
<dbReference type="InterPro" id="IPR001453">
    <property type="entry name" value="MoaB/Mog_dom"/>
</dbReference>
<dbReference type="NCBIfam" id="TIGR00200">
    <property type="entry name" value="cinA_nterm"/>
    <property type="match status" value="1"/>
</dbReference>
<dbReference type="NCBIfam" id="TIGR00177">
    <property type="entry name" value="molyb_syn"/>
    <property type="match status" value="1"/>
</dbReference>
<dbReference type="NCBIfam" id="TIGR00199">
    <property type="entry name" value="PncC_domain"/>
    <property type="match status" value="1"/>
</dbReference>
<dbReference type="NCBIfam" id="NF001813">
    <property type="entry name" value="PRK00549.1"/>
    <property type="match status" value="1"/>
</dbReference>
<dbReference type="PANTHER" id="PTHR13939">
    <property type="entry name" value="NICOTINAMIDE-NUCLEOTIDE AMIDOHYDROLASE PNCC"/>
    <property type="match status" value="1"/>
</dbReference>
<dbReference type="PANTHER" id="PTHR13939:SF0">
    <property type="entry name" value="NMN AMIDOHYDROLASE-LIKE PROTEIN YFAY"/>
    <property type="match status" value="1"/>
</dbReference>
<dbReference type="Pfam" id="PF02464">
    <property type="entry name" value="CinA"/>
    <property type="match status" value="1"/>
</dbReference>
<dbReference type="Pfam" id="PF18146">
    <property type="entry name" value="CinA_KH"/>
    <property type="match status" value="1"/>
</dbReference>
<dbReference type="Pfam" id="PF00994">
    <property type="entry name" value="MoCF_biosynth"/>
    <property type="match status" value="1"/>
</dbReference>
<dbReference type="PIRSF" id="PIRSF006728">
    <property type="entry name" value="CinA"/>
    <property type="match status" value="1"/>
</dbReference>
<dbReference type="SMART" id="SM00852">
    <property type="entry name" value="MoCF_biosynth"/>
    <property type="match status" value="1"/>
</dbReference>
<dbReference type="SUPFAM" id="SSF142433">
    <property type="entry name" value="CinA-like"/>
    <property type="match status" value="1"/>
</dbReference>
<dbReference type="SUPFAM" id="SSF53218">
    <property type="entry name" value="Molybdenum cofactor biosynthesis proteins"/>
    <property type="match status" value="1"/>
</dbReference>
<proteinExistence type="inferred from homology"/>
<comment type="similarity">
    <text evidence="1">Belongs to the CinA family.</text>
</comment>
<reference key="1">
    <citation type="submission" date="2007-05" db="EMBL/GenBank/DDBJ databases">
        <title>Complete sequence of Thermosipho melanesiensis BI429.</title>
        <authorList>
            <consortium name="US DOE Joint Genome Institute"/>
            <person name="Copeland A."/>
            <person name="Lucas S."/>
            <person name="Lapidus A."/>
            <person name="Barry K."/>
            <person name="Glavina del Rio T."/>
            <person name="Dalin E."/>
            <person name="Tice H."/>
            <person name="Pitluck S."/>
            <person name="Chertkov O."/>
            <person name="Brettin T."/>
            <person name="Bruce D."/>
            <person name="Detter J.C."/>
            <person name="Han C."/>
            <person name="Schmutz J."/>
            <person name="Larimer F."/>
            <person name="Land M."/>
            <person name="Hauser L."/>
            <person name="Kyrpides N."/>
            <person name="Mikhailova N."/>
            <person name="Nelson K."/>
            <person name="Gogarten J.P."/>
            <person name="Noll K."/>
            <person name="Richardson P."/>
        </authorList>
    </citation>
    <scope>NUCLEOTIDE SEQUENCE [LARGE SCALE GENOMIC DNA]</scope>
    <source>
        <strain>DSM 12029 / CIP 104789 / BI429</strain>
    </source>
</reference>
<sequence length="401" mass="44974">MKKSIILAIGNELVEGIIIDTNSKYISKKLLEIGYKTVAINTLPDDLEILVEEIRDSLKKADLLITTGGLGPTEDDLTREAISKTVGKELIFNEKLYNSILKKVKEFHSEIPKNIEKQAWVINGARIIENPVGTAPGQILQIGEKQIIILPGPPVEMKPIFEESLKFLEKFEKIYQKRIKTLGIPEAILVEKYKDIIYKYKDVNVATLASHISGVELRFTGKKEKVDEIVKLLKEKLSDHIYALDNETIEEVVFKKLEGKSVSFAESCTGGLISAKFVSIPGISKVFKGAIVAYSNKVKEKVLNVNKNTIQKYGAVSKECVMEMAKEVSYFLDTDYAVAVSGIAGPTGGTKEKPVGTVWICAYKRENDYYLVEKFFFRGNREIIREKSALNAFNLLRRILS</sequence>
<feature type="chain" id="PRO_1000058744" description="CinA-like protein">
    <location>
        <begin position="1"/>
        <end position="401"/>
    </location>
</feature>
<gene>
    <name type="ordered locus">Tmel_0783</name>
</gene>